<proteinExistence type="inferred from homology"/>
<organism>
    <name type="scientific">Lactococcus lactis subsp. lactis</name>
    <name type="common">Streptococcus lactis</name>
    <dbReference type="NCBI Taxonomy" id="1360"/>
    <lineage>
        <taxon>Bacteria</taxon>
        <taxon>Bacillati</taxon>
        <taxon>Bacillota</taxon>
        <taxon>Bacilli</taxon>
        <taxon>Lactobacillales</taxon>
        <taxon>Streptococcaceae</taxon>
        <taxon>Lactococcus</taxon>
    </lineage>
</organism>
<gene>
    <name evidence="1" type="primary">pfkA</name>
    <name type="synonym">pfk</name>
</gene>
<comment type="function">
    <text evidence="1">Catalyzes the phosphorylation of D-fructose 6-phosphate to fructose 1,6-bisphosphate by ATP, the first committing step of glycolysis.</text>
</comment>
<comment type="catalytic activity">
    <reaction evidence="1">
        <text>beta-D-fructose 6-phosphate + ATP = beta-D-fructose 1,6-bisphosphate + ADP + H(+)</text>
        <dbReference type="Rhea" id="RHEA:16109"/>
        <dbReference type="ChEBI" id="CHEBI:15378"/>
        <dbReference type="ChEBI" id="CHEBI:30616"/>
        <dbReference type="ChEBI" id="CHEBI:32966"/>
        <dbReference type="ChEBI" id="CHEBI:57634"/>
        <dbReference type="ChEBI" id="CHEBI:456216"/>
        <dbReference type="EC" id="2.7.1.11"/>
    </reaction>
</comment>
<comment type="cofactor">
    <cofactor evidence="1">
        <name>Mg(2+)</name>
        <dbReference type="ChEBI" id="CHEBI:18420"/>
    </cofactor>
</comment>
<comment type="activity regulation">
    <text evidence="1">Allosterically activated by ADP and other diphosphonucleosides, and allosterically inhibited by phosphoenolpyruvate.</text>
</comment>
<comment type="pathway">
    <text evidence="1">Carbohydrate degradation; glycolysis; D-glyceraldehyde 3-phosphate and glycerone phosphate from D-glucose: step 3/4.</text>
</comment>
<comment type="subunit">
    <text evidence="1">Homotetramer.</text>
</comment>
<comment type="subcellular location">
    <subcellularLocation>
        <location evidence="1">Cytoplasm</location>
    </subcellularLocation>
</comment>
<comment type="similarity">
    <text evidence="1">Belongs to the phosphofructokinase type A (PFKA) family. ATP-dependent PFK group I subfamily. Prokaryotic clade 'B1' sub-subfamily.</text>
</comment>
<feature type="chain" id="PRO_0000437188" description="ATP-dependent 6-phosphofructokinase">
    <location>
        <begin position="1"/>
        <end position="340"/>
    </location>
</feature>
<feature type="active site" description="Proton acceptor" evidence="1">
    <location>
        <position position="127"/>
    </location>
</feature>
<feature type="binding site" evidence="1">
    <location>
        <position position="11"/>
    </location>
    <ligand>
        <name>ATP</name>
        <dbReference type="ChEBI" id="CHEBI:30616"/>
    </ligand>
</feature>
<feature type="binding site" evidence="1">
    <location>
        <begin position="21"/>
        <end position="25"/>
    </location>
    <ligand>
        <name>ADP</name>
        <dbReference type="ChEBI" id="CHEBI:456216"/>
        <note>allosteric activator; ligand shared between dimeric partners</note>
    </ligand>
</feature>
<feature type="binding site" evidence="1">
    <location>
        <begin position="72"/>
        <end position="73"/>
    </location>
    <ligand>
        <name>ATP</name>
        <dbReference type="ChEBI" id="CHEBI:30616"/>
    </ligand>
</feature>
<feature type="binding site" evidence="1">
    <location>
        <begin position="102"/>
        <end position="105"/>
    </location>
    <ligand>
        <name>ATP</name>
        <dbReference type="ChEBI" id="CHEBI:30616"/>
    </ligand>
</feature>
<feature type="binding site" evidence="1">
    <location>
        <position position="103"/>
    </location>
    <ligand>
        <name>Mg(2+)</name>
        <dbReference type="ChEBI" id="CHEBI:18420"/>
        <note>catalytic</note>
    </ligand>
</feature>
<feature type="binding site" description="in other chain" evidence="1">
    <location>
        <begin position="125"/>
        <end position="127"/>
    </location>
    <ligand>
        <name>substrate</name>
        <note>ligand shared between dimeric partners</note>
    </ligand>
</feature>
<feature type="binding site" description="in other chain" evidence="1">
    <location>
        <position position="154"/>
    </location>
    <ligand>
        <name>ADP</name>
        <dbReference type="ChEBI" id="CHEBI:456216"/>
        <note>allosteric activator; ligand shared between dimeric partners</note>
    </ligand>
</feature>
<feature type="binding site" evidence="1">
    <location>
        <position position="162"/>
    </location>
    <ligand>
        <name>substrate</name>
        <note>ligand shared between dimeric partners</note>
    </ligand>
</feature>
<feature type="binding site" description="in other chain" evidence="1">
    <location>
        <begin position="169"/>
        <end position="171"/>
    </location>
    <ligand>
        <name>substrate</name>
        <note>ligand shared between dimeric partners</note>
    </ligand>
</feature>
<feature type="binding site" description="in other chain" evidence="1">
    <location>
        <begin position="185"/>
        <end position="187"/>
    </location>
    <ligand>
        <name>ADP</name>
        <dbReference type="ChEBI" id="CHEBI:456216"/>
        <note>allosteric activator; ligand shared between dimeric partners</note>
    </ligand>
</feature>
<feature type="binding site" description="in other chain" evidence="1">
    <location>
        <position position="211"/>
    </location>
    <ligand>
        <name>ADP</name>
        <dbReference type="ChEBI" id="CHEBI:456216"/>
        <note>allosteric activator; ligand shared between dimeric partners</note>
    </ligand>
</feature>
<feature type="binding site" description="in other chain" evidence="1">
    <location>
        <begin position="213"/>
        <end position="215"/>
    </location>
    <ligand>
        <name>ADP</name>
        <dbReference type="ChEBI" id="CHEBI:456216"/>
        <note>allosteric activator; ligand shared between dimeric partners</note>
    </ligand>
</feature>
<feature type="binding site" description="in other chain" evidence="1">
    <location>
        <position position="222"/>
    </location>
    <ligand>
        <name>substrate</name>
        <note>ligand shared between dimeric partners</note>
    </ligand>
</feature>
<feature type="binding site" evidence="1">
    <location>
        <position position="244"/>
    </location>
    <ligand>
        <name>substrate</name>
        <note>ligand shared between dimeric partners</note>
    </ligand>
</feature>
<feature type="binding site" description="in other chain" evidence="1">
    <location>
        <begin position="250"/>
        <end position="253"/>
    </location>
    <ligand>
        <name>substrate</name>
        <note>ligand shared between dimeric partners</note>
    </ligand>
</feature>
<sequence length="340" mass="35806">MKRIAVLTSGGDAPGMNAAIRAVVRKAISEGIEVYGINHGYAGMVAGDIFPLTSASVGDKIGRGGTFLYSARYPEFAQVEGQLAGIEQLKKFGIEGVVVIGGDGSYHGAMRLTEHGFPAVGLPGTIDNDIVGTDFTIGFDTAVSTVVDALDKIRDTSSSHNRTFVVEVMGRNAGDIALNAGIAAGADDICIPEKEFKFENVVNNINKGYEKGKNHHIIVLAEGVMTGEEFATKLKEAGYKGDLRVSVLGHIQRGGSPTARDRVLASRMGARAVELLRDGIGGVAVGIRNEELVESPILGTAEEGALFSLTTEGGIKVNNPHKAGLELYRLNSALNNLNLN</sequence>
<dbReference type="EC" id="2.7.1.11" evidence="1"/>
<dbReference type="EMBL" id="L07920">
    <property type="protein sequence ID" value="AAA99894.1"/>
    <property type="molecule type" value="Genomic_DNA"/>
</dbReference>
<dbReference type="PIR" id="A40620">
    <property type="entry name" value="JN0614"/>
</dbReference>
<dbReference type="RefSeq" id="WP_003131080.1">
    <property type="nucleotide sequence ID" value="NZ_WUBD01000007.1"/>
</dbReference>
<dbReference type="SMR" id="P0DOB7"/>
<dbReference type="GeneID" id="89633566"/>
<dbReference type="OMA" id="GYQGMIE"/>
<dbReference type="UniPathway" id="UPA00109">
    <property type="reaction ID" value="UER00182"/>
</dbReference>
<dbReference type="GO" id="GO:0005945">
    <property type="term" value="C:6-phosphofructokinase complex"/>
    <property type="evidence" value="ECO:0007669"/>
    <property type="project" value="TreeGrafter"/>
</dbReference>
<dbReference type="GO" id="GO:0003872">
    <property type="term" value="F:6-phosphofructokinase activity"/>
    <property type="evidence" value="ECO:0007669"/>
    <property type="project" value="UniProtKB-UniRule"/>
</dbReference>
<dbReference type="GO" id="GO:0016208">
    <property type="term" value="F:AMP binding"/>
    <property type="evidence" value="ECO:0007669"/>
    <property type="project" value="TreeGrafter"/>
</dbReference>
<dbReference type="GO" id="GO:0005524">
    <property type="term" value="F:ATP binding"/>
    <property type="evidence" value="ECO:0007669"/>
    <property type="project" value="UniProtKB-KW"/>
</dbReference>
<dbReference type="GO" id="GO:0070095">
    <property type="term" value="F:fructose-6-phosphate binding"/>
    <property type="evidence" value="ECO:0007669"/>
    <property type="project" value="TreeGrafter"/>
</dbReference>
<dbReference type="GO" id="GO:0042802">
    <property type="term" value="F:identical protein binding"/>
    <property type="evidence" value="ECO:0007669"/>
    <property type="project" value="TreeGrafter"/>
</dbReference>
<dbReference type="GO" id="GO:0046872">
    <property type="term" value="F:metal ion binding"/>
    <property type="evidence" value="ECO:0007669"/>
    <property type="project" value="UniProtKB-KW"/>
</dbReference>
<dbReference type="GO" id="GO:0048029">
    <property type="term" value="F:monosaccharide binding"/>
    <property type="evidence" value="ECO:0007669"/>
    <property type="project" value="TreeGrafter"/>
</dbReference>
<dbReference type="GO" id="GO:0061621">
    <property type="term" value="P:canonical glycolysis"/>
    <property type="evidence" value="ECO:0007669"/>
    <property type="project" value="TreeGrafter"/>
</dbReference>
<dbReference type="GO" id="GO:0030388">
    <property type="term" value="P:fructose 1,6-bisphosphate metabolic process"/>
    <property type="evidence" value="ECO:0007669"/>
    <property type="project" value="TreeGrafter"/>
</dbReference>
<dbReference type="GO" id="GO:0006002">
    <property type="term" value="P:fructose 6-phosphate metabolic process"/>
    <property type="evidence" value="ECO:0007669"/>
    <property type="project" value="InterPro"/>
</dbReference>
<dbReference type="CDD" id="cd00763">
    <property type="entry name" value="Bacterial_PFK"/>
    <property type="match status" value="1"/>
</dbReference>
<dbReference type="FunFam" id="3.40.50.450:FF:000001">
    <property type="entry name" value="ATP-dependent 6-phosphofructokinase"/>
    <property type="match status" value="1"/>
</dbReference>
<dbReference type="FunFam" id="3.40.50.460:FF:000002">
    <property type="entry name" value="ATP-dependent 6-phosphofructokinase"/>
    <property type="match status" value="1"/>
</dbReference>
<dbReference type="Gene3D" id="3.40.50.450">
    <property type="match status" value="1"/>
</dbReference>
<dbReference type="Gene3D" id="3.40.50.460">
    <property type="entry name" value="Phosphofructokinase domain"/>
    <property type="match status" value="1"/>
</dbReference>
<dbReference type="HAMAP" id="MF_00339">
    <property type="entry name" value="Phosphofructokinase_I_B1"/>
    <property type="match status" value="1"/>
</dbReference>
<dbReference type="InterPro" id="IPR022953">
    <property type="entry name" value="ATP_PFK"/>
</dbReference>
<dbReference type="InterPro" id="IPR012003">
    <property type="entry name" value="ATP_PFK_prok-type"/>
</dbReference>
<dbReference type="InterPro" id="IPR012828">
    <property type="entry name" value="PFKA_ATP_prok"/>
</dbReference>
<dbReference type="InterPro" id="IPR015912">
    <property type="entry name" value="Phosphofructokinase_CS"/>
</dbReference>
<dbReference type="InterPro" id="IPR000023">
    <property type="entry name" value="Phosphofructokinase_dom"/>
</dbReference>
<dbReference type="InterPro" id="IPR035966">
    <property type="entry name" value="PKF_sf"/>
</dbReference>
<dbReference type="NCBIfam" id="TIGR02482">
    <property type="entry name" value="PFKA_ATP"/>
    <property type="match status" value="1"/>
</dbReference>
<dbReference type="NCBIfam" id="NF002872">
    <property type="entry name" value="PRK03202.1"/>
    <property type="match status" value="1"/>
</dbReference>
<dbReference type="PANTHER" id="PTHR13697:SF4">
    <property type="entry name" value="ATP-DEPENDENT 6-PHOSPHOFRUCTOKINASE"/>
    <property type="match status" value="1"/>
</dbReference>
<dbReference type="PANTHER" id="PTHR13697">
    <property type="entry name" value="PHOSPHOFRUCTOKINASE"/>
    <property type="match status" value="1"/>
</dbReference>
<dbReference type="Pfam" id="PF00365">
    <property type="entry name" value="PFK"/>
    <property type="match status" value="1"/>
</dbReference>
<dbReference type="PIRSF" id="PIRSF000532">
    <property type="entry name" value="ATP_PFK_prok"/>
    <property type="match status" value="1"/>
</dbReference>
<dbReference type="PRINTS" id="PR00476">
    <property type="entry name" value="PHFRCTKINASE"/>
</dbReference>
<dbReference type="SUPFAM" id="SSF53784">
    <property type="entry name" value="Phosphofructokinase"/>
    <property type="match status" value="1"/>
</dbReference>
<dbReference type="PROSITE" id="PS00433">
    <property type="entry name" value="PHOSPHOFRUCTOKINASE"/>
    <property type="match status" value="1"/>
</dbReference>
<accession>P0DOB7</accession>
<accession>Q07636</accession>
<name>PFKA2_LACLL</name>
<keyword id="KW-0021">Allosteric enzyme</keyword>
<keyword id="KW-0067">ATP-binding</keyword>
<keyword id="KW-0963">Cytoplasm</keyword>
<keyword id="KW-0324">Glycolysis</keyword>
<keyword id="KW-0418">Kinase</keyword>
<keyword id="KW-0460">Magnesium</keyword>
<keyword id="KW-0479">Metal-binding</keyword>
<keyword id="KW-0547">Nucleotide-binding</keyword>
<keyword id="KW-0808">Transferase</keyword>
<evidence type="ECO:0000255" key="1">
    <source>
        <dbReference type="HAMAP-Rule" id="MF_00339"/>
    </source>
</evidence>
<reference key="1">
    <citation type="journal article" date="1993" name="J. Bacteriol.">
        <title>Identification of a novel operon in Lactococcus lactis encoding three enzymes for lactic acid synthesis: phosphofructokinase, pyruvate kinase, and lactate dehydrogenase.</title>
        <authorList>
            <person name="Llanos R.M."/>
            <person name="Harris C.J."/>
            <person name="Hillier A.J."/>
            <person name="Davidson B.E."/>
        </authorList>
    </citation>
    <scope>NUCLEOTIDE SEQUENCE [GENOMIC DNA]</scope>
    <source>
        <strain>LM0230</strain>
    </source>
</reference>
<protein>
    <recommendedName>
        <fullName evidence="1">ATP-dependent 6-phosphofructokinase</fullName>
        <shortName evidence="1">ATP-PFK</shortName>
        <shortName evidence="1">Phosphofructokinase</shortName>
        <ecNumber evidence="1">2.7.1.11</ecNumber>
    </recommendedName>
    <alternativeName>
        <fullName evidence="1">Phosphohexokinase</fullName>
    </alternativeName>
</protein>